<feature type="chain" id="PRO_0000153436" description="Histidinol-phosphate aminotransferase 2">
    <location>
        <begin position="1"/>
        <end position="351"/>
    </location>
</feature>
<feature type="modified residue" description="N6-(pyridoxal phosphate)lysine" evidence="1">
    <location>
        <position position="210"/>
    </location>
</feature>
<name>HIS82_RHIME</name>
<sequence>MSKLWSPIVAALKPYVPGEQPRMADLVKLNTNESPYGPSEKALGAIRAAADTDLRLYPDPVALGLRQAIAARHQVSVGEVFVGNGSDEVLAHTFAALLKHDRPLLFPDISYSFYTTYAGLFGIEAVEVPLDAAFRIDIADYRRPSGAVILPNPNAPTGIGLPLAEIERLVADHPGQPVVIDEAYIDFGGESAIALVPKYDNLLVVQTFSKSRALAGLRVGFAIGQRPLIEALERVKDSFNSYPLGRAAQAGATAAIEDEAWFEATRGKIIASRAKLTSELEKRGFEVLPSQANFVFARHPGHAGQTLAAKLRERAVIVRHFAKPRIADFLRITIGTDAECAKLVAALDEVL</sequence>
<keyword id="KW-0028">Amino-acid biosynthesis</keyword>
<keyword id="KW-0032">Aminotransferase</keyword>
<keyword id="KW-0368">Histidine biosynthesis</keyword>
<keyword id="KW-0663">Pyridoxal phosphate</keyword>
<keyword id="KW-1185">Reference proteome</keyword>
<keyword id="KW-0808">Transferase</keyword>
<dbReference type="EC" id="2.6.1.9"/>
<dbReference type="EMBL" id="AL591688">
    <property type="protein sequence ID" value="CAC47847.1"/>
    <property type="molecule type" value="Genomic_DNA"/>
</dbReference>
<dbReference type="RefSeq" id="NP_387374.1">
    <property type="nucleotide sequence ID" value="NC_003047.1"/>
</dbReference>
<dbReference type="RefSeq" id="WP_010970532.1">
    <property type="nucleotide sequence ID" value="NC_003047.1"/>
</dbReference>
<dbReference type="SMR" id="Q92L21"/>
<dbReference type="EnsemblBacteria" id="CAC47847">
    <property type="protein sequence ID" value="CAC47847"/>
    <property type="gene ID" value="SMc03885"/>
</dbReference>
<dbReference type="KEGG" id="sme:SMc03885"/>
<dbReference type="PATRIC" id="fig|266834.11.peg.4824"/>
<dbReference type="eggNOG" id="COG0079">
    <property type="taxonomic scope" value="Bacteria"/>
</dbReference>
<dbReference type="HOGENOM" id="CLU_017584_3_0_5"/>
<dbReference type="OrthoDB" id="9809616at2"/>
<dbReference type="UniPathway" id="UPA00031">
    <property type="reaction ID" value="UER00012"/>
</dbReference>
<dbReference type="Proteomes" id="UP000001976">
    <property type="component" value="Chromosome"/>
</dbReference>
<dbReference type="GO" id="GO:0004400">
    <property type="term" value="F:histidinol-phosphate transaminase activity"/>
    <property type="evidence" value="ECO:0007669"/>
    <property type="project" value="UniProtKB-UniRule"/>
</dbReference>
<dbReference type="GO" id="GO:0030170">
    <property type="term" value="F:pyridoxal phosphate binding"/>
    <property type="evidence" value="ECO:0007669"/>
    <property type="project" value="InterPro"/>
</dbReference>
<dbReference type="GO" id="GO:0000105">
    <property type="term" value="P:L-histidine biosynthetic process"/>
    <property type="evidence" value="ECO:0007669"/>
    <property type="project" value="UniProtKB-UniRule"/>
</dbReference>
<dbReference type="CDD" id="cd00609">
    <property type="entry name" value="AAT_like"/>
    <property type="match status" value="1"/>
</dbReference>
<dbReference type="Gene3D" id="3.90.1150.10">
    <property type="entry name" value="Aspartate Aminotransferase, domain 1"/>
    <property type="match status" value="1"/>
</dbReference>
<dbReference type="Gene3D" id="3.40.640.10">
    <property type="entry name" value="Type I PLP-dependent aspartate aminotransferase-like (Major domain)"/>
    <property type="match status" value="1"/>
</dbReference>
<dbReference type="HAMAP" id="MF_01023">
    <property type="entry name" value="HisC_aminotrans_2"/>
    <property type="match status" value="1"/>
</dbReference>
<dbReference type="InterPro" id="IPR001917">
    <property type="entry name" value="Aminotrans_II_pyridoxalP_BS"/>
</dbReference>
<dbReference type="InterPro" id="IPR004839">
    <property type="entry name" value="Aminotransferase_I/II_large"/>
</dbReference>
<dbReference type="InterPro" id="IPR005861">
    <property type="entry name" value="HisP_aminotrans"/>
</dbReference>
<dbReference type="InterPro" id="IPR050106">
    <property type="entry name" value="HistidinolP_aminotransfase"/>
</dbReference>
<dbReference type="InterPro" id="IPR015424">
    <property type="entry name" value="PyrdxlP-dep_Trfase"/>
</dbReference>
<dbReference type="InterPro" id="IPR015421">
    <property type="entry name" value="PyrdxlP-dep_Trfase_major"/>
</dbReference>
<dbReference type="InterPro" id="IPR015422">
    <property type="entry name" value="PyrdxlP-dep_Trfase_small"/>
</dbReference>
<dbReference type="NCBIfam" id="TIGR01141">
    <property type="entry name" value="hisC"/>
    <property type="match status" value="1"/>
</dbReference>
<dbReference type="PANTHER" id="PTHR43643:SF3">
    <property type="entry name" value="HISTIDINOL-PHOSPHATE AMINOTRANSFERASE"/>
    <property type="match status" value="1"/>
</dbReference>
<dbReference type="PANTHER" id="PTHR43643">
    <property type="entry name" value="HISTIDINOL-PHOSPHATE AMINOTRANSFERASE 2"/>
    <property type="match status" value="1"/>
</dbReference>
<dbReference type="Pfam" id="PF00155">
    <property type="entry name" value="Aminotran_1_2"/>
    <property type="match status" value="1"/>
</dbReference>
<dbReference type="SUPFAM" id="SSF53383">
    <property type="entry name" value="PLP-dependent transferases"/>
    <property type="match status" value="1"/>
</dbReference>
<dbReference type="PROSITE" id="PS00599">
    <property type="entry name" value="AA_TRANSFER_CLASS_2"/>
    <property type="match status" value="1"/>
</dbReference>
<comment type="catalytic activity">
    <reaction>
        <text>L-histidinol phosphate + 2-oxoglutarate = 3-(imidazol-4-yl)-2-oxopropyl phosphate + L-glutamate</text>
        <dbReference type="Rhea" id="RHEA:23744"/>
        <dbReference type="ChEBI" id="CHEBI:16810"/>
        <dbReference type="ChEBI" id="CHEBI:29985"/>
        <dbReference type="ChEBI" id="CHEBI:57766"/>
        <dbReference type="ChEBI" id="CHEBI:57980"/>
        <dbReference type="EC" id="2.6.1.9"/>
    </reaction>
</comment>
<comment type="cofactor">
    <cofactor evidence="1">
        <name>pyridoxal 5'-phosphate</name>
        <dbReference type="ChEBI" id="CHEBI:597326"/>
    </cofactor>
</comment>
<comment type="pathway">
    <text>Amino-acid biosynthesis; L-histidine biosynthesis; L-histidine from 5-phospho-alpha-D-ribose 1-diphosphate: step 7/9.</text>
</comment>
<comment type="subunit">
    <text evidence="1">Homodimer.</text>
</comment>
<comment type="similarity">
    <text evidence="2">Belongs to the class-II pyridoxal-phosphate-dependent aminotransferase family. Histidinol-phosphate aminotransferase subfamily.</text>
</comment>
<evidence type="ECO:0000250" key="1"/>
<evidence type="ECO:0000305" key="2"/>
<gene>
    <name type="primary">hisC2</name>
    <name type="ordered locus">R03268</name>
    <name type="ORF">SMc03885</name>
</gene>
<reference key="1">
    <citation type="journal article" date="2001" name="Proc. Natl. Acad. Sci. U.S.A.">
        <title>Analysis of the chromosome sequence of the legume symbiont Sinorhizobium meliloti strain 1021.</title>
        <authorList>
            <person name="Capela D."/>
            <person name="Barloy-Hubler F."/>
            <person name="Gouzy J."/>
            <person name="Bothe G."/>
            <person name="Ampe F."/>
            <person name="Batut J."/>
            <person name="Boistard P."/>
            <person name="Becker A."/>
            <person name="Boutry M."/>
            <person name="Cadieu E."/>
            <person name="Dreano S."/>
            <person name="Gloux S."/>
            <person name="Godrie T."/>
            <person name="Goffeau A."/>
            <person name="Kahn D."/>
            <person name="Kiss E."/>
            <person name="Lelaure V."/>
            <person name="Masuy D."/>
            <person name="Pohl T."/>
            <person name="Portetelle D."/>
            <person name="Puehler A."/>
            <person name="Purnelle B."/>
            <person name="Ramsperger U."/>
            <person name="Renard C."/>
            <person name="Thebault P."/>
            <person name="Vandenbol M."/>
            <person name="Weidner S."/>
            <person name="Galibert F."/>
        </authorList>
    </citation>
    <scope>NUCLEOTIDE SEQUENCE [LARGE SCALE GENOMIC DNA]</scope>
    <source>
        <strain>1021</strain>
    </source>
</reference>
<reference key="2">
    <citation type="journal article" date="2001" name="Science">
        <title>The composite genome of the legume symbiont Sinorhizobium meliloti.</title>
        <authorList>
            <person name="Galibert F."/>
            <person name="Finan T.M."/>
            <person name="Long S.R."/>
            <person name="Puehler A."/>
            <person name="Abola P."/>
            <person name="Ampe F."/>
            <person name="Barloy-Hubler F."/>
            <person name="Barnett M.J."/>
            <person name="Becker A."/>
            <person name="Boistard P."/>
            <person name="Bothe G."/>
            <person name="Boutry M."/>
            <person name="Bowser L."/>
            <person name="Buhrmester J."/>
            <person name="Cadieu E."/>
            <person name="Capela D."/>
            <person name="Chain P."/>
            <person name="Cowie A."/>
            <person name="Davis R.W."/>
            <person name="Dreano S."/>
            <person name="Federspiel N.A."/>
            <person name="Fisher R.F."/>
            <person name="Gloux S."/>
            <person name="Godrie T."/>
            <person name="Goffeau A."/>
            <person name="Golding B."/>
            <person name="Gouzy J."/>
            <person name="Gurjal M."/>
            <person name="Hernandez-Lucas I."/>
            <person name="Hong A."/>
            <person name="Huizar L."/>
            <person name="Hyman R.W."/>
            <person name="Jones T."/>
            <person name="Kahn D."/>
            <person name="Kahn M.L."/>
            <person name="Kalman S."/>
            <person name="Keating D.H."/>
            <person name="Kiss E."/>
            <person name="Komp C."/>
            <person name="Lelaure V."/>
            <person name="Masuy D."/>
            <person name="Palm C."/>
            <person name="Peck M.C."/>
            <person name="Pohl T.M."/>
            <person name="Portetelle D."/>
            <person name="Purnelle B."/>
            <person name="Ramsperger U."/>
            <person name="Surzycki R."/>
            <person name="Thebault P."/>
            <person name="Vandenbol M."/>
            <person name="Vorhoelter F.J."/>
            <person name="Weidner S."/>
            <person name="Wells D.H."/>
            <person name="Wong K."/>
            <person name="Yeh K.-C."/>
            <person name="Batut J."/>
        </authorList>
    </citation>
    <scope>NUCLEOTIDE SEQUENCE [LARGE SCALE GENOMIC DNA]</scope>
    <source>
        <strain>1021</strain>
    </source>
</reference>
<proteinExistence type="inferred from homology"/>
<organism>
    <name type="scientific">Rhizobium meliloti (strain 1021)</name>
    <name type="common">Ensifer meliloti</name>
    <name type="synonym">Sinorhizobium meliloti</name>
    <dbReference type="NCBI Taxonomy" id="266834"/>
    <lineage>
        <taxon>Bacteria</taxon>
        <taxon>Pseudomonadati</taxon>
        <taxon>Pseudomonadota</taxon>
        <taxon>Alphaproteobacteria</taxon>
        <taxon>Hyphomicrobiales</taxon>
        <taxon>Rhizobiaceae</taxon>
        <taxon>Sinorhizobium/Ensifer group</taxon>
        <taxon>Sinorhizobium</taxon>
    </lineage>
</organism>
<protein>
    <recommendedName>
        <fullName>Histidinol-phosphate aminotransferase 2</fullName>
        <ecNumber>2.6.1.9</ecNumber>
    </recommendedName>
    <alternativeName>
        <fullName>Imidazole acetol-phosphate transaminase 2</fullName>
    </alternativeName>
</protein>
<accession>Q92L21</accession>